<sequence>GIPCAESCVWIPCTVTALLGCSCSNNVCYN</sequence>
<name>CYH4_VIOHE</name>
<protein>
    <recommendedName>
        <fullName>Cycloviolacin-H4</fullName>
    </recommendedName>
</protein>
<accession>P85234</accession>
<reference evidence="4" key="1">
    <citation type="journal article" date="2006" name="J. Nat. Prod.">
        <title>Cycloviolacin H4, a hydrophobic cyclotide from Viola hederaceae.</title>
        <authorList>
            <person name="Chen B."/>
            <person name="Colgrave M.L."/>
            <person name="Wang C."/>
            <person name="Craik D.J."/>
        </authorList>
    </citation>
    <scope>PROTEIN SEQUENCE</scope>
    <scope>CROSS-LINK</scope>
    <scope>FUNCTION</scope>
    <scope>MASS SPECTROMETRY</scope>
    <source>
        <tissue evidence="3">Root</tissue>
    </source>
</reference>
<proteinExistence type="evidence at protein level"/>
<comment type="function">
    <text evidence="2 3 4">Probably participates in a plant defense mechanism. Has potent hemolytic activity.</text>
</comment>
<comment type="domain">
    <text evidence="1">The presence of a 'disulfide through disulfide knot' structurally defines this protein as a knottin.</text>
</comment>
<comment type="PTM">
    <text evidence="2 3">This is a cyclic peptide.</text>
</comment>
<comment type="mass spectrometry"/>
<comment type="similarity">
    <text evidence="2">Belongs to the cyclotide family. Bracelet subfamily.</text>
</comment>
<comment type="caution">
    <text evidence="4">This peptide is cyclic. The start position was chosen by similarity to OAK1 (kalata-B1) for which the DNA sequence is known.</text>
</comment>
<keyword id="KW-0204">Cytolysis</keyword>
<keyword id="KW-0903">Direct protein sequencing</keyword>
<keyword id="KW-1015">Disulfide bond</keyword>
<keyword id="KW-0354">Hemolysis</keyword>
<keyword id="KW-0960">Knottin</keyword>
<keyword id="KW-0611">Plant defense</keyword>
<organism>
    <name type="scientific">Viola hederacea</name>
    <name type="common">Australian violet</name>
    <dbReference type="NCBI Taxonomy" id="180952"/>
    <lineage>
        <taxon>Eukaryota</taxon>
        <taxon>Viridiplantae</taxon>
        <taxon>Streptophyta</taxon>
        <taxon>Embryophyta</taxon>
        <taxon>Tracheophyta</taxon>
        <taxon>Spermatophyta</taxon>
        <taxon>Magnoliopsida</taxon>
        <taxon>eudicotyledons</taxon>
        <taxon>Gunneridae</taxon>
        <taxon>Pentapetalae</taxon>
        <taxon>rosids</taxon>
        <taxon>fabids</taxon>
        <taxon>Malpighiales</taxon>
        <taxon>Violaceae</taxon>
        <taxon>Viola</taxon>
        <taxon>Viola subgen. Viola</taxon>
        <taxon>Viola sect. Erpetion</taxon>
    </lineage>
</organism>
<evidence type="ECO:0000250" key="1">
    <source>
        <dbReference type="UniProtKB" id="P56879"/>
    </source>
</evidence>
<evidence type="ECO:0000255" key="2">
    <source>
        <dbReference type="PROSITE-ProRule" id="PRU00395"/>
    </source>
</evidence>
<evidence type="ECO:0000269" key="3">
    <source>
    </source>
</evidence>
<evidence type="ECO:0000305" key="4"/>
<feature type="peptide" id="PRO_0000302128" description="Cycloviolacin-H4" evidence="2 3">
    <location>
        <begin position="1"/>
        <end position="30"/>
    </location>
</feature>
<feature type="disulfide bond" evidence="1 2">
    <location>
        <begin position="4"/>
        <end position="21"/>
    </location>
</feature>
<feature type="disulfide bond" evidence="1 2">
    <location>
        <begin position="8"/>
        <end position="23"/>
    </location>
</feature>
<feature type="disulfide bond" evidence="1 2">
    <location>
        <begin position="13"/>
        <end position="28"/>
    </location>
</feature>
<feature type="cross-link" description="Cyclopeptide (Gly-Asn)">
    <location>
        <begin position="1"/>
        <end position="30"/>
    </location>
</feature>
<dbReference type="SMR" id="P85234"/>
<dbReference type="GO" id="GO:0006952">
    <property type="term" value="P:defense response"/>
    <property type="evidence" value="ECO:0007669"/>
    <property type="project" value="UniProtKB-KW"/>
</dbReference>
<dbReference type="GO" id="GO:0031640">
    <property type="term" value="P:killing of cells of another organism"/>
    <property type="evidence" value="ECO:0007669"/>
    <property type="project" value="UniProtKB-KW"/>
</dbReference>
<dbReference type="InterPro" id="IPR005535">
    <property type="entry name" value="Cyclotide"/>
</dbReference>
<dbReference type="InterPro" id="IPR012323">
    <property type="entry name" value="Cyclotide_bracelet_CS"/>
</dbReference>
<dbReference type="InterPro" id="IPR036146">
    <property type="entry name" value="Cyclotide_sf"/>
</dbReference>
<dbReference type="Pfam" id="PF03784">
    <property type="entry name" value="Cyclotide"/>
    <property type="match status" value="1"/>
</dbReference>
<dbReference type="PIRSF" id="PIRSF037891">
    <property type="entry name" value="Cycloviolacin"/>
    <property type="match status" value="1"/>
</dbReference>
<dbReference type="SUPFAM" id="SSF57038">
    <property type="entry name" value="Cyclotides"/>
    <property type="match status" value="1"/>
</dbReference>
<dbReference type="PROSITE" id="PS51052">
    <property type="entry name" value="CYCLOTIDE"/>
    <property type="match status" value="1"/>
</dbReference>
<dbReference type="PROSITE" id="PS60008">
    <property type="entry name" value="CYCLOTIDE_BRACELET"/>
    <property type="match status" value="1"/>
</dbReference>